<protein>
    <recommendedName>
        <fullName>Leucine dehydrogenase</fullName>
        <shortName>LeuDH</shortName>
        <ecNumber>1.4.1.9</ecNumber>
    </recommendedName>
</protein>
<proteinExistence type="inferred from homology"/>
<sequence>MTLEIFEYLEKYDYEQVVFCQDKESGLKAIIAIHDTTLGPALGGTRMWTYDSEEAAIEDALRLAKGMTYKNAAAGLNLGGAKTVIIGDPRKDKSEAMFRALGRYIQGLNGRYITAEDVGTTVDDMDIIHEETDFVTGISPSFGSSGNPSPVTAYGVYRGMKAAAKEAFGTDNLEGKVIAVQGVGNVAYHLCKHLHAEGAKLIVTDINKEAVQRAVEEFGASAVEPNEIYGVECDIYAPCALGATVNDETIPQLKAKVIAGSANNQLKEDRHGDIIHEMGIVYAPDYVINAGGVINVADELYGYNRERALKRVESIYDTIAKVIEISKRDGIATYVAADRLAEERIASLKNSRSTYLRNGHDIISRR</sequence>
<name>DHLE_BACCR</name>
<accession>P0A392</accession>
<accession>Q59194</accession>
<feature type="chain" id="PRO_0000182801" description="Leucine dehydrogenase">
    <location>
        <begin position="1"/>
        <end position="366"/>
    </location>
</feature>
<feature type="active site" evidence="3">
    <location>
        <position position="82"/>
    </location>
</feature>
<feature type="binding site" evidence="2">
    <location>
        <begin position="182"/>
        <end position="188"/>
    </location>
    <ligand>
        <name>NAD(+)</name>
        <dbReference type="ChEBI" id="CHEBI:57540"/>
    </ligand>
</feature>
<organism>
    <name type="scientific">Bacillus cereus (strain ATCC 14579 / DSM 31 / CCUG 7414 / JCM 2152 / NBRC 15305 / NCIMB 9373 / NCTC 2599 / NRRL B-3711)</name>
    <dbReference type="NCBI Taxonomy" id="226900"/>
    <lineage>
        <taxon>Bacteria</taxon>
        <taxon>Bacillati</taxon>
        <taxon>Bacillota</taxon>
        <taxon>Bacilli</taxon>
        <taxon>Bacillales</taxon>
        <taxon>Bacillaceae</taxon>
        <taxon>Bacillus</taxon>
        <taxon>Bacillus cereus group</taxon>
    </lineage>
</organism>
<dbReference type="EC" id="1.4.1.9"/>
<dbReference type="EMBL" id="AE016877">
    <property type="protein sequence ID" value="AAP11078.1"/>
    <property type="molecule type" value="Genomic_DNA"/>
</dbReference>
<dbReference type="RefSeq" id="NP_833877.1">
    <property type="nucleotide sequence ID" value="NC_004722.1"/>
</dbReference>
<dbReference type="RefSeq" id="WP_000171355.1">
    <property type="nucleotide sequence ID" value="NZ_CP138336.1"/>
</dbReference>
<dbReference type="SMR" id="P0A392"/>
<dbReference type="STRING" id="226900.BC_4162"/>
<dbReference type="MetOSite" id="P0A392"/>
<dbReference type="KEGG" id="bce:BC4162"/>
<dbReference type="PATRIC" id="fig|226900.8.peg.4302"/>
<dbReference type="HOGENOM" id="CLU_025763_0_0_9"/>
<dbReference type="OrthoDB" id="9803297at2"/>
<dbReference type="BRENDA" id="1.4.1.9">
    <property type="organism ID" value="648"/>
</dbReference>
<dbReference type="UniPathway" id="UPA00363">
    <property type="reaction ID" value="UER00858"/>
</dbReference>
<dbReference type="Proteomes" id="UP000001417">
    <property type="component" value="Chromosome"/>
</dbReference>
<dbReference type="GO" id="GO:0050049">
    <property type="term" value="F:L-leucine dehydrogenase activity"/>
    <property type="evidence" value="ECO:0007669"/>
    <property type="project" value="UniProtKB-EC"/>
</dbReference>
<dbReference type="GO" id="GO:0006552">
    <property type="term" value="P:L-leucine catabolic process"/>
    <property type="evidence" value="ECO:0007669"/>
    <property type="project" value="UniProtKB-UniPathway"/>
</dbReference>
<dbReference type="CDD" id="cd01075">
    <property type="entry name" value="NAD_bind_Leu_Phe_Val_DH"/>
    <property type="match status" value="1"/>
</dbReference>
<dbReference type="FunFam" id="3.40.50.10860:FF:000010">
    <property type="entry name" value="Leucine dehydrogenase"/>
    <property type="match status" value="1"/>
</dbReference>
<dbReference type="FunFam" id="3.40.50.720:FF:000196">
    <property type="entry name" value="Leucine dehydrogenase"/>
    <property type="match status" value="1"/>
</dbReference>
<dbReference type="Gene3D" id="3.40.50.10860">
    <property type="entry name" value="Leucine Dehydrogenase, chain A, domain 1"/>
    <property type="match status" value="1"/>
</dbReference>
<dbReference type="Gene3D" id="3.40.50.720">
    <property type="entry name" value="NAD(P)-binding Rossmann-like Domain"/>
    <property type="match status" value="1"/>
</dbReference>
<dbReference type="InterPro" id="IPR046346">
    <property type="entry name" value="Aminoacid_DH-like_N_sf"/>
</dbReference>
<dbReference type="InterPro" id="IPR006095">
    <property type="entry name" value="Glu/Leu/Phe/Val/Trp_DH"/>
</dbReference>
<dbReference type="InterPro" id="IPR006096">
    <property type="entry name" value="Glu/Leu/Phe/Val/Trp_DH_C"/>
</dbReference>
<dbReference type="InterPro" id="IPR006097">
    <property type="entry name" value="Glu/Leu/Phe/Val/Trp_DH_dimer"/>
</dbReference>
<dbReference type="InterPro" id="IPR033524">
    <property type="entry name" value="Glu/Leu/Phe/Val_DH_AS"/>
</dbReference>
<dbReference type="InterPro" id="IPR016211">
    <property type="entry name" value="Glu/Phe/Leu/Val/Trp_DH_bac/arc"/>
</dbReference>
<dbReference type="InterPro" id="IPR036291">
    <property type="entry name" value="NAD(P)-bd_dom_sf"/>
</dbReference>
<dbReference type="PANTHER" id="PTHR42722">
    <property type="entry name" value="LEUCINE DEHYDROGENASE"/>
    <property type="match status" value="1"/>
</dbReference>
<dbReference type="PANTHER" id="PTHR42722:SF1">
    <property type="entry name" value="VALINE DEHYDROGENASE"/>
    <property type="match status" value="1"/>
</dbReference>
<dbReference type="Pfam" id="PF00208">
    <property type="entry name" value="ELFV_dehydrog"/>
    <property type="match status" value="2"/>
</dbReference>
<dbReference type="Pfam" id="PF02812">
    <property type="entry name" value="ELFV_dehydrog_N"/>
    <property type="match status" value="1"/>
</dbReference>
<dbReference type="PIRSF" id="PIRSF000188">
    <property type="entry name" value="Phe_leu_dh"/>
    <property type="match status" value="1"/>
</dbReference>
<dbReference type="PRINTS" id="PR00082">
    <property type="entry name" value="GLFDHDRGNASE"/>
</dbReference>
<dbReference type="SMART" id="SM00839">
    <property type="entry name" value="ELFV_dehydrog"/>
    <property type="match status" value="1"/>
</dbReference>
<dbReference type="SUPFAM" id="SSF53223">
    <property type="entry name" value="Aminoacid dehydrogenase-like, N-terminal domain"/>
    <property type="match status" value="1"/>
</dbReference>
<dbReference type="SUPFAM" id="SSF51735">
    <property type="entry name" value="NAD(P)-binding Rossmann-fold domains"/>
    <property type="match status" value="1"/>
</dbReference>
<dbReference type="PROSITE" id="PS00074">
    <property type="entry name" value="GLFV_DEHYDROGENASE"/>
    <property type="match status" value="1"/>
</dbReference>
<keyword id="KW-0101">Branched-chain amino acid catabolism</keyword>
<keyword id="KW-0520">NAD</keyword>
<keyword id="KW-0560">Oxidoreductase</keyword>
<keyword id="KW-1185">Reference proteome</keyword>
<evidence type="ECO:0000250" key="1"/>
<evidence type="ECO:0000255" key="2"/>
<evidence type="ECO:0000255" key="3">
    <source>
        <dbReference type="PROSITE-ProRule" id="PRU10011"/>
    </source>
</evidence>
<evidence type="ECO:0000305" key="4"/>
<reference key="1">
    <citation type="journal article" date="2003" name="Nature">
        <title>Genome sequence of Bacillus cereus and comparative analysis with Bacillus anthracis.</title>
        <authorList>
            <person name="Ivanova N."/>
            <person name="Sorokin A."/>
            <person name="Anderson I."/>
            <person name="Galleron N."/>
            <person name="Candelon B."/>
            <person name="Kapatral V."/>
            <person name="Bhattacharyya A."/>
            <person name="Reznik G."/>
            <person name="Mikhailova N."/>
            <person name="Lapidus A."/>
            <person name="Chu L."/>
            <person name="Mazur M."/>
            <person name="Goltsman E."/>
            <person name="Larsen N."/>
            <person name="D'Souza M."/>
            <person name="Walunas T."/>
            <person name="Grechkin Y."/>
            <person name="Pusch G."/>
            <person name="Haselkorn R."/>
            <person name="Fonstein M."/>
            <person name="Ehrlich S.D."/>
            <person name="Overbeek R."/>
            <person name="Kyrpides N.C."/>
        </authorList>
    </citation>
    <scope>NUCLEOTIDE SEQUENCE [LARGE SCALE GENOMIC DNA]</scope>
    <source>
        <strain>ATCC 14579 / DSM 31 / CCUG 7414 / JCM 2152 / NBRC 15305 / NCIMB 9373 / NCTC 2599 / NRRL B-3711</strain>
    </source>
</reference>
<gene>
    <name type="primary">ldh</name>
    <name type="ordered locus">BC_4162</name>
</gene>
<comment type="function">
    <text evidence="1">Catalyzes the reversible deamination of L-leucine to 4-methyl-2-oxopentanoate.</text>
</comment>
<comment type="catalytic activity">
    <reaction>
        <text>L-leucine + NAD(+) + H2O = 4-methyl-2-oxopentanoate + NH4(+) + NADH + H(+)</text>
        <dbReference type="Rhea" id="RHEA:12220"/>
        <dbReference type="ChEBI" id="CHEBI:15377"/>
        <dbReference type="ChEBI" id="CHEBI:15378"/>
        <dbReference type="ChEBI" id="CHEBI:17865"/>
        <dbReference type="ChEBI" id="CHEBI:28938"/>
        <dbReference type="ChEBI" id="CHEBI:57427"/>
        <dbReference type="ChEBI" id="CHEBI:57540"/>
        <dbReference type="ChEBI" id="CHEBI:57945"/>
        <dbReference type="EC" id="1.4.1.9"/>
    </reaction>
</comment>
<comment type="pathway">
    <text>Amino-acid degradation; L-leucine degradation; 4-methyl-2-oxopentanoate from L-leucine (dehydrogenase route): step 1/1.</text>
</comment>
<comment type="similarity">
    <text evidence="4">Belongs to the Glu/Leu/Phe/Val dehydrogenases family.</text>
</comment>